<reference key="1">
    <citation type="journal article" date="2000" name="Science">
        <title>The genome sequence of Drosophila melanogaster.</title>
        <authorList>
            <person name="Adams M.D."/>
            <person name="Celniker S.E."/>
            <person name="Holt R.A."/>
            <person name="Evans C.A."/>
            <person name="Gocayne J.D."/>
            <person name="Amanatides P.G."/>
            <person name="Scherer S.E."/>
            <person name="Li P.W."/>
            <person name="Hoskins R.A."/>
            <person name="Galle R.F."/>
            <person name="George R.A."/>
            <person name="Lewis S.E."/>
            <person name="Richards S."/>
            <person name="Ashburner M."/>
            <person name="Henderson S.N."/>
            <person name="Sutton G.G."/>
            <person name="Wortman J.R."/>
            <person name="Yandell M.D."/>
            <person name="Zhang Q."/>
            <person name="Chen L.X."/>
            <person name="Brandon R.C."/>
            <person name="Rogers Y.-H.C."/>
            <person name="Blazej R.G."/>
            <person name="Champe M."/>
            <person name="Pfeiffer B.D."/>
            <person name="Wan K.H."/>
            <person name="Doyle C."/>
            <person name="Baxter E.G."/>
            <person name="Helt G."/>
            <person name="Nelson C.R."/>
            <person name="Miklos G.L.G."/>
            <person name="Abril J.F."/>
            <person name="Agbayani A."/>
            <person name="An H.-J."/>
            <person name="Andrews-Pfannkoch C."/>
            <person name="Baldwin D."/>
            <person name="Ballew R.M."/>
            <person name="Basu A."/>
            <person name="Baxendale J."/>
            <person name="Bayraktaroglu L."/>
            <person name="Beasley E.M."/>
            <person name="Beeson K.Y."/>
            <person name="Benos P.V."/>
            <person name="Berman B.P."/>
            <person name="Bhandari D."/>
            <person name="Bolshakov S."/>
            <person name="Borkova D."/>
            <person name="Botchan M.R."/>
            <person name="Bouck J."/>
            <person name="Brokstein P."/>
            <person name="Brottier P."/>
            <person name="Burtis K.C."/>
            <person name="Busam D.A."/>
            <person name="Butler H."/>
            <person name="Cadieu E."/>
            <person name="Center A."/>
            <person name="Chandra I."/>
            <person name="Cherry J.M."/>
            <person name="Cawley S."/>
            <person name="Dahlke C."/>
            <person name="Davenport L.B."/>
            <person name="Davies P."/>
            <person name="de Pablos B."/>
            <person name="Delcher A."/>
            <person name="Deng Z."/>
            <person name="Mays A.D."/>
            <person name="Dew I."/>
            <person name="Dietz S.M."/>
            <person name="Dodson K."/>
            <person name="Doup L.E."/>
            <person name="Downes M."/>
            <person name="Dugan-Rocha S."/>
            <person name="Dunkov B.C."/>
            <person name="Dunn P."/>
            <person name="Durbin K.J."/>
            <person name="Evangelista C.C."/>
            <person name="Ferraz C."/>
            <person name="Ferriera S."/>
            <person name="Fleischmann W."/>
            <person name="Fosler C."/>
            <person name="Gabrielian A.E."/>
            <person name="Garg N.S."/>
            <person name="Gelbart W.M."/>
            <person name="Glasser K."/>
            <person name="Glodek A."/>
            <person name="Gong F."/>
            <person name="Gorrell J.H."/>
            <person name="Gu Z."/>
            <person name="Guan P."/>
            <person name="Harris M."/>
            <person name="Harris N.L."/>
            <person name="Harvey D.A."/>
            <person name="Heiman T.J."/>
            <person name="Hernandez J.R."/>
            <person name="Houck J."/>
            <person name="Hostin D."/>
            <person name="Houston K.A."/>
            <person name="Howland T.J."/>
            <person name="Wei M.-H."/>
            <person name="Ibegwam C."/>
            <person name="Jalali M."/>
            <person name="Kalush F."/>
            <person name="Karpen G.H."/>
            <person name="Ke Z."/>
            <person name="Kennison J.A."/>
            <person name="Ketchum K.A."/>
            <person name="Kimmel B.E."/>
            <person name="Kodira C.D."/>
            <person name="Kraft C.L."/>
            <person name="Kravitz S."/>
            <person name="Kulp D."/>
            <person name="Lai Z."/>
            <person name="Lasko P."/>
            <person name="Lei Y."/>
            <person name="Levitsky A.A."/>
            <person name="Li J.H."/>
            <person name="Li Z."/>
            <person name="Liang Y."/>
            <person name="Lin X."/>
            <person name="Liu X."/>
            <person name="Mattei B."/>
            <person name="McIntosh T.C."/>
            <person name="McLeod M.P."/>
            <person name="McPherson D."/>
            <person name="Merkulov G."/>
            <person name="Milshina N.V."/>
            <person name="Mobarry C."/>
            <person name="Morris J."/>
            <person name="Moshrefi A."/>
            <person name="Mount S.M."/>
            <person name="Moy M."/>
            <person name="Murphy B."/>
            <person name="Murphy L."/>
            <person name="Muzny D.M."/>
            <person name="Nelson D.L."/>
            <person name="Nelson D.R."/>
            <person name="Nelson K.A."/>
            <person name="Nixon K."/>
            <person name="Nusskern D.R."/>
            <person name="Pacleb J.M."/>
            <person name="Palazzolo M."/>
            <person name="Pittman G.S."/>
            <person name="Pan S."/>
            <person name="Pollard J."/>
            <person name="Puri V."/>
            <person name="Reese M.G."/>
            <person name="Reinert K."/>
            <person name="Remington K."/>
            <person name="Saunders R.D.C."/>
            <person name="Scheeler F."/>
            <person name="Shen H."/>
            <person name="Shue B.C."/>
            <person name="Siden-Kiamos I."/>
            <person name="Simpson M."/>
            <person name="Skupski M.P."/>
            <person name="Smith T.J."/>
            <person name="Spier E."/>
            <person name="Spradling A.C."/>
            <person name="Stapleton M."/>
            <person name="Strong R."/>
            <person name="Sun E."/>
            <person name="Svirskas R."/>
            <person name="Tector C."/>
            <person name="Turner R."/>
            <person name="Venter E."/>
            <person name="Wang A.H."/>
            <person name="Wang X."/>
            <person name="Wang Z.-Y."/>
            <person name="Wassarman D.A."/>
            <person name="Weinstock G.M."/>
            <person name="Weissenbach J."/>
            <person name="Williams S.M."/>
            <person name="Woodage T."/>
            <person name="Worley K.C."/>
            <person name="Wu D."/>
            <person name="Yang S."/>
            <person name="Yao Q.A."/>
            <person name="Ye J."/>
            <person name="Yeh R.-F."/>
            <person name="Zaveri J.S."/>
            <person name="Zhan M."/>
            <person name="Zhang G."/>
            <person name="Zhao Q."/>
            <person name="Zheng L."/>
            <person name="Zheng X.H."/>
            <person name="Zhong F.N."/>
            <person name="Zhong W."/>
            <person name="Zhou X."/>
            <person name="Zhu S.C."/>
            <person name="Zhu X."/>
            <person name="Smith H.O."/>
            <person name="Gibbs R.A."/>
            <person name="Myers E.W."/>
            <person name="Rubin G.M."/>
            <person name="Venter J.C."/>
        </authorList>
    </citation>
    <scope>NUCLEOTIDE SEQUENCE [LARGE SCALE GENOMIC DNA]</scope>
    <source>
        <strain evidence="3">Berkeley</strain>
    </source>
</reference>
<reference key="2">
    <citation type="journal article" date="2002" name="Genome Biol.">
        <title>Annotation of the Drosophila melanogaster euchromatic genome: a systematic review.</title>
        <authorList>
            <person name="Misra S."/>
            <person name="Crosby M.A."/>
            <person name="Mungall C.J."/>
            <person name="Matthews B.B."/>
            <person name="Campbell K.S."/>
            <person name="Hradecky P."/>
            <person name="Huang Y."/>
            <person name="Kaminker J.S."/>
            <person name="Millburn G.H."/>
            <person name="Prochnik S.E."/>
            <person name="Smith C.D."/>
            <person name="Tupy J.L."/>
            <person name="Whitfield E.J."/>
            <person name="Bayraktaroglu L."/>
            <person name="Berman B.P."/>
            <person name="Bettencourt B.R."/>
            <person name="Celniker S.E."/>
            <person name="de Grey A.D.N.J."/>
            <person name="Drysdale R.A."/>
            <person name="Harris N.L."/>
            <person name="Richter J."/>
            <person name="Russo S."/>
            <person name="Schroeder A.J."/>
            <person name="Shu S.Q."/>
            <person name="Stapleton M."/>
            <person name="Yamada C."/>
            <person name="Ashburner M."/>
            <person name="Gelbart W.M."/>
            <person name="Rubin G.M."/>
            <person name="Lewis S.E."/>
        </authorList>
    </citation>
    <scope>GENOME REANNOTATION</scope>
    <source>
        <strain>Berkeley</strain>
    </source>
</reference>
<reference key="3">
    <citation type="journal article" date="2002" name="Genome Biol.">
        <title>A Drosophila full-length cDNA resource.</title>
        <authorList>
            <person name="Stapleton M."/>
            <person name="Carlson J.W."/>
            <person name="Brokstein P."/>
            <person name="Yu C."/>
            <person name="Champe M."/>
            <person name="George R.A."/>
            <person name="Guarin H."/>
            <person name="Kronmiller B."/>
            <person name="Pacleb J.M."/>
            <person name="Park S."/>
            <person name="Wan K.H."/>
            <person name="Rubin G.M."/>
            <person name="Celniker S.E."/>
        </authorList>
    </citation>
    <scope>NUCLEOTIDE SEQUENCE [LARGE SCALE MRNA]</scope>
    <source>
        <strain evidence="4">Berkeley</strain>
        <tissue evidence="4">Testis</tissue>
    </source>
</reference>
<gene>
    <name type="primary">CLS</name>
    <name type="ORF">CG4774</name>
</gene>
<feature type="chain" id="PRO_0000056819" description="Probable cardiolipin synthase (CMP-forming)">
    <location>
        <begin position="1"/>
        <end position="322"/>
    </location>
</feature>
<feature type="transmembrane region" description="Helical" evidence="2">
    <location>
        <begin position="143"/>
        <end position="163"/>
    </location>
</feature>
<feature type="transmembrane region" description="Helical" evidence="2">
    <location>
        <begin position="199"/>
        <end position="219"/>
    </location>
</feature>
<feature type="transmembrane region" description="Helical" evidence="2">
    <location>
        <begin position="289"/>
        <end position="309"/>
    </location>
</feature>
<dbReference type="EC" id="2.7.8.41" evidence="1"/>
<dbReference type="EMBL" id="AE014297">
    <property type="protein sequence ID" value="AAF56496.2"/>
    <property type="molecule type" value="Genomic_DNA"/>
</dbReference>
<dbReference type="EMBL" id="AE014297">
    <property type="protein sequence ID" value="AAF56497.2"/>
    <property type="molecule type" value="Genomic_DNA"/>
</dbReference>
<dbReference type="EMBL" id="AE014297">
    <property type="protein sequence ID" value="AAN14062.1"/>
    <property type="molecule type" value="Genomic_DNA"/>
</dbReference>
<dbReference type="EMBL" id="AY113254">
    <property type="protein sequence ID" value="AAM29259.1"/>
    <property type="molecule type" value="mRNA"/>
</dbReference>
<dbReference type="RefSeq" id="NP_001262969.1">
    <property type="nucleotide sequence ID" value="NM_001276040.1"/>
</dbReference>
<dbReference type="RefSeq" id="NP_651418.1">
    <property type="nucleotide sequence ID" value="NM_143161.2"/>
</dbReference>
<dbReference type="RefSeq" id="NP_733116.1">
    <property type="nucleotide sequence ID" value="NM_170237.2"/>
</dbReference>
<dbReference type="RefSeq" id="NP_733117.1">
    <property type="nucleotide sequence ID" value="NM_170238.2"/>
</dbReference>
<dbReference type="SMR" id="Q8MZC4"/>
<dbReference type="BioGRID" id="68015">
    <property type="interactions" value="1"/>
</dbReference>
<dbReference type="FunCoup" id="Q8MZC4">
    <property type="interactions" value="1244"/>
</dbReference>
<dbReference type="STRING" id="7227.FBpp0084303"/>
<dbReference type="PaxDb" id="7227-FBpp0084303"/>
<dbReference type="DNASU" id="43104"/>
<dbReference type="EnsemblMetazoa" id="FBtr0084929">
    <property type="protein sequence ID" value="FBpp0084303"/>
    <property type="gene ID" value="FBgn0039360"/>
</dbReference>
<dbReference type="EnsemblMetazoa" id="FBtr0084930">
    <property type="protein sequence ID" value="FBpp0084304"/>
    <property type="gene ID" value="FBgn0039360"/>
</dbReference>
<dbReference type="EnsemblMetazoa" id="FBtr0084931">
    <property type="protein sequence ID" value="FBpp0084305"/>
    <property type="gene ID" value="FBgn0039360"/>
</dbReference>
<dbReference type="EnsemblMetazoa" id="FBtr0331359">
    <property type="protein sequence ID" value="FBpp0303777"/>
    <property type="gene ID" value="FBgn0039360"/>
</dbReference>
<dbReference type="GeneID" id="43104"/>
<dbReference type="KEGG" id="dme:Dmel_CG4774"/>
<dbReference type="UCSC" id="CG4774-RA">
    <property type="organism name" value="d. melanogaster"/>
</dbReference>
<dbReference type="AGR" id="FB:FBgn0039360"/>
<dbReference type="CTD" id="43104"/>
<dbReference type="FlyBase" id="FBgn0039360">
    <property type="gene designation" value="CLS"/>
</dbReference>
<dbReference type="VEuPathDB" id="VectorBase:FBgn0039360"/>
<dbReference type="eggNOG" id="KOG1617">
    <property type="taxonomic scope" value="Eukaryota"/>
</dbReference>
<dbReference type="GeneTree" id="ENSGT00390000001607"/>
<dbReference type="HOGENOM" id="CLU_051314_0_1_1"/>
<dbReference type="InParanoid" id="Q8MZC4"/>
<dbReference type="OMA" id="RIAMSPY"/>
<dbReference type="OrthoDB" id="10020554at2759"/>
<dbReference type="PhylomeDB" id="Q8MZC4"/>
<dbReference type="Reactome" id="R-DME-1482925">
    <property type="pathway name" value="Acyl chain remodelling of PG"/>
</dbReference>
<dbReference type="Reactome" id="R-DME-1483076">
    <property type="pathway name" value="Synthesis of CL"/>
</dbReference>
<dbReference type="BioGRID-ORCS" id="43104">
    <property type="hits" value="0 hits in 1 CRISPR screen"/>
</dbReference>
<dbReference type="GenomeRNAi" id="43104"/>
<dbReference type="PRO" id="PR:Q8MZC4"/>
<dbReference type="Proteomes" id="UP000000803">
    <property type="component" value="Chromosome 3R"/>
</dbReference>
<dbReference type="Bgee" id="FBgn0039360">
    <property type="expression patterns" value="Expressed in mid-late elongation-stage spermatid (Drosophila) in testis and 73 other cell types or tissues"/>
</dbReference>
<dbReference type="ExpressionAtlas" id="Q8MZC4">
    <property type="expression patterns" value="baseline and differential"/>
</dbReference>
<dbReference type="GO" id="GO:0005743">
    <property type="term" value="C:mitochondrial inner membrane"/>
    <property type="evidence" value="ECO:0000250"/>
    <property type="project" value="UniProtKB"/>
</dbReference>
<dbReference type="GO" id="GO:0005739">
    <property type="term" value="C:mitochondrion"/>
    <property type="evidence" value="ECO:0000318"/>
    <property type="project" value="GO_Central"/>
</dbReference>
<dbReference type="GO" id="GO:0043337">
    <property type="term" value="F:cardiolipin synthase (CMP-forming)"/>
    <property type="evidence" value="ECO:0000314"/>
    <property type="project" value="FlyBase"/>
</dbReference>
<dbReference type="GO" id="GO:0032049">
    <property type="term" value="P:cardiolipin biosynthetic process"/>
    <property type="evidence" value="ECO:0000318"/>
    <property type="project" value="GO_Central"/>
</dbReference>
<dbReference type="GO" id="GO:0007006">
    <property type="term" value="P:mitochondrial membrane organization"/>
    <property type="evidence" value="ECO:0000314"/>
    <property type="project" value="FlyBase"/>
</dbReference>
<dbReference type="FunFam" id="1.20.120.1760:FF:000005">
    <property type="entry name" value="Cardiolipin synthase 1"/>
    <property type="match status" value="1"/>
</dbReference>
<dbReference type="Gene3D" id="1.20.120.1760">
    <property type="match status" value="1"/>
</dbReference>
<dbReference type="InterPro" id="IPR050324">
    <property type="entry name" value="CDP-alcohol_PTase-I"/>
</dbReference>
<dbReference type="InterPro" id="IPR000462">
    <property type="entry name" value="CDP-OH_P_trans"/>
</dbReference>
<dbReference type="InterPro" id="IPR043130">
    <property type="entry name" value="CDP-OH_PTrfase_TM_dom"/>
</dbReference>
<dbReference type="PANTHER" id="PTHR14269:SF60">
    <property type="entry name" value="CARDIOLIPIN SYNTHASE (CMP-FORMING)"/>
    <property type="match status" value="1"/>
</dbReference>
<dbReference type="PANTHER" id="PTHR14269">
    <property type="entry name" value="CDP-DIACYLGLYCEROL--GLYCEROL-3-PHOSPHATE 3-PHOSPHATIDYLTRANSFERASE-RELATED"/>
    <property type="match status" value="1"/>
</dbReference>
<dbReference type="Pfam" id="PF01066">
    <property type="entry name" value="CDP-OH_P_transf"/>
    <property type="match status" value="1"/>
</dbReference>
<protein>
    <recommendedName>
        <fullName>Probable cardiolipin synthase (CMP-forming)</fullName>
        <shortName>CLS</shortName>
        <ecNumber evidence="1">2.7.8.41</ecNumber>
    </recommendedName>
</protein>
<proteinExistence type="evidence at transcript level"/>
<comment type="function">
    <text evidence="1">Catalyzes the synthesis of cardiolipin (CL) (diphosphatidylglycerol) by specifically transferring a phosphatidyl group from CDP-diacylglycerol to phosphatidylglycerol (PG). CL is a key phospholipid in mitochondrial membranes and plays important roles in maintaining the functional integrity and dynamics of mitochondria under both optimal and stress conditions.</text>
</comment>
<comment type="catalytic activity">
    <reaction evidence="1">
        <text>a CDP-1,2-diacyl-sn-glycerol + a 1,2-diacyl-sn-glycero-3-phospho-(1'-sn-glycerol) = a cardiolipin + CMP + H(+)</text>
        <dbReference type="Rhea" id="RHEA:32931"/>
        <dbReference type="ChEBI" id="CHEBI:15378"/>
        <dbReference type="ChEBI" id="CHEBI:58332"/>
        <dbReference type="ChEBI" id="CHEBI:60377"/>
        <dbReference type="ChEBI" id="CHEBI:62237"/>
        <dbReference type="ChEBI" id="CHEBI:64716"/>
        <dbReference type="EC" id="2.7.8.41"/>
    </reaction>
</comment>
<comment type="subcellular location">
    <subcellularLocation>
        <location evidence="1">Mitochondrion inner membrane</location>
        <topology evidence="2">Multi-pass membrane protein</topology>
    </subcellularLocation>
</comment>
<comment type="similarity">
    <text evidence="5">Belongs to the CDP-alcohol phosphatidyltransferase class-I family.</text>
</comment>
<name>CRLS1_DROME</name>
<sequence>MLPAIIFRQVQRPLHHGAATLEHVLGVGGSSFVNCLNRYAAATGFIRISFLDIKRRRNYELARLRLYADEKKQSLHLRTLQGRHLLQGVIERKNFLVDDIREARHKVQERVREKIDEIREERENIMTIPNMLTISRAVLSPYIGYVIVQGDFTLGMSLLAFAGITDLLDGQIARRWPSQASKFGSFLDPMADKLLMGSLVISLCYTDLLPMWLMGIVVFRDVFLLGAGFVIRYISLPPPKTFSRYFDATHVTAQLEPTLLSKINTGVQLATIGLSLGAPIWNYLDHPALQGLWYLTGLTTAATALSYVMNRHNTFKIIQKKT</sequence>
<organism evidence="6">
    <name type="scientific">Drosophila melanogaster</name>
    <name type="common">Fruit fly</name>
    <dbReference type="NCBI Taxonomy" id="7227"/>
    <lineage>
        <taxon>Eukaryota</taxon>
        <taxon>Metazoa</taxon>
        <taxon>Ecdysozoa</taxon>
        <taxon>Arthropoda</taxon>
        <taxon>Hexapoda</taxon>
        <taxon>Insecta</taxon>
        <taxon>Pterygota</taxon>
        <taxon>Neoptera</taxon>
        <taxon>Endopterygota</taxon>
        <taxon>Diptera</taxon>
        <taxon>Brachycera</taxon>
        <taxon>Muscomorpha</taxon>
        <taxon>Ephydroidea</taxon>
        <taxon>Drosophilidae</taxon>
        <taxon>Drosophila</taxon>
        <taxon>Sophophora</taxon>
    </lineage>
</organism>
<evidence type="ECO:0000250" key="1">
    <source>
        <dbReference type="UniProtKB" id="Q9UJA2"/>
    </source>
</evidence>
<evidence type="ECO:0000255" key="2"/>
<evidence type="ECO:0000269" key="3">
    <source>
    </source>
</evidence>
<evidence type="ECO:0000269" key="4">
    <source>
    </source>
</evidence>
<evidence type="ECO:0000305" key="5"/>
<evidence type="ECO:0000312" key="6">
    <source>
        <dbReference type="EMBL" id="AAM29259.1"/>
    </source>
</evidence>
<keyword id="KW-0444">Lipid biosynthesis</keyword>
<keyword id="KW-0443">Lipid metabolism</keyword>
<keyword id="KW-0472">Membrane</keyword>
<keyword id="KW-0496">Mitochondrion</keyword>
<keyword id="KW-0999">Mitochondrion inner membrane</keyword>
<keyword id="KW-0594">Phospholipid biosynthesis</keyword>
<keyword id="KW-1208">Phospholipid metabolism</keyword>
<keyword id="KW-1185">Reference proteome</keyword>
<keyword id="KW-0808">Transferase</keyword>
<keyword id="KW-0812">Transmembrane</keyword>
<keyword id="KW-1133">Transmembrane helix</keyword>
<accession>Q8MZC4</accession>
<accession>A4V3F1</accession>
<accession>Q9VBN4</accession>